<feature type="chain" id="PRO_0000319557" description="Large ribosomal subunit protein eL38">
    <location>
        <begin position="1"/>
        <end position="70"/>
    </location>
</feature>
<dbReference type="EMBL" id="AE013599">
    <property type="protein sequence ID" value="EAA46007.1"/>
    <property type="molecule type" value="Genomic_DNA"/>
</dbReference>
<dbReference type="EMBL" id="AY075491">
    <property type="protein sequence ID" value="AAL68301.1"/>
    <property type="molecule type" value="mRNA"/>
</dbReference>
<dbReference type="RefSeq" id="NP_001036440.1">
    <property type="nucleotide sequence ID" value="NM_001042975.2"/>
</dbReference>
<dbReference type="RefSeq" id="NP_001260700.1">
    <property type="nucleotide sequence ID" value="NM_001273771.1"/>
</dbReference>
<dbReference type="PDB" id="4V6W">
    <property type="method" value="EM"/>
    <property type="resolution" value="6.00 A"/>
    <property type="chains" value="Ck=1-70"/>
</dbReference>
<dbReference type="PDB" id="6XU6">
    <property type="method" value="EM"/>
    <property type="resolution" value="3.50 A"/>
    <property type="chains" value="Ck=1-70"/>
</dbReference>
<dbReference type="PDB" id="6XU7">
    <property type="method" value="EM"/>
    <property type="resolution" value="4.90 A"/>
    <property type="chains" value="Ck=1-70"/>
</dbReference>
<dbReference type="PDB" id="6XU8">
    <property type="method" value="EM"/>
    <property type="resolution" value="3.00 A"/>
    <property type="chains" value="Ck=1-70"/>
</dbReference>
<dbReference type="PDBsum" id="4V6W"/>
<dbReference type="PDBsum" id="6XU6"/>
<dbReference type="PDBsum" id="6XU7"/>
<dbReference type="PDBsum" id="6XU8"/>
<dbReference type="EMDB" id="EMD-10622"/>
<dbReference type="EMDB" id="EMD-10623"/>
<dbReference type="EMDB" id="EMD-10624"/>
<dbReference type="SMR" id="Q9W5N2"/>
<dbReference type="BioGRID" id="78269">
    <property type="interactions" value="115"/>
</dbReference>
<dbReference type="FunCoup" id="Q9W5N2">
    <property type="interactions" value="1162"/>
</dbReference>
<dbReference type="IntAct" id="Q9W5N2">
    <property type="interactions" value="4"/>
</dbReference>
<dbReference type="STRING" id="7227.FBpp0306998"/>
<dbReference type="PaxDb" id="7227-FBpp0110412"/>
<dbReference type="DNASU" id="3355144"/>
<dbReference type="EnsemblMetazoa" id="FBtr0111120">
    <property type="protein sequence ID" value="FBpp0110412"/>
    <property type="gene ID" value="FBgn0040007"/>
</dbReference>
<dbReference type="EnsemblMetazoa" id="FBtr0334985">
    <property type="protein sequence ID" value="FBpp0306998"/>
    <property type="gene ID" value="FBgn0040007"/>
</dbReference>
<dbReference type="GeneID" id="3355144"/>
<dbReference type="KEGG" id="dme:Dmel_CG18001"/>
<dbReference type="AGR" id="FB:FBgn0040007"/>
<dbReference type="CTD" id="6169"/>
<dbReference type="FlyBase" id="FBgn0040007">
    <property type="gene designation" value="RpL38"/>
</dbReference>
<dbReference type="VEuPathDB" id="VectorBase:FBgn0040007"/>
<dbReference type="eggNOG" id="KOG3499">
    <property type="taxonomic scope" value="Eukaryota"/>
</dbReference>
<dbReference type="GeneTree" id="ENSGT00390000003718"/>
<dbReference type="HOGENOM" id="CLU_152057_2_0_1"/>
<dbReference type="InParanoid" id="Q9W5N2"/>
<dbReference type="OMA" id="RCHRFIY"/>
<dbReference type="OrthoDB" id="10250488at2759"/>
<dbReference type="PhylomeDB" id="Q9W5N2"/>
<dbReference type="Reactome" id="R-DME-156827">
    <property type="pathway name" value="L13a-mediated translational silencing of Ceruloplasmin expression"/>
</dbReference>
<dbReference type="Reactome" id="R-DME-1799339">
    <property type="pathway name" value="SRP-dependent cotranslational protein targeting to membrane"/>
</dbReference>
<dbReference type="Reactome" id="R-DME-72689">
    <property type="pathway name" value="Formation of a pool of free 40S subunits"/>
</dbReference>
<dbReference type="Reactome" id="R-DME-72706">
    <property type="pathway name" value="GTP hydrolysis and joining of the 60S ribosomal subunit"/>
</dbReference>
<dbReference type="Reactome" id="R-DME-975956">
    <property type="pathway name" value="Nonsense Mediated Decay (NMD) independent of the Exon Junction Complex (EJC)"/>
</dbReference>
<dbReference type="Reactome" id="R-DME-975957">
    <property type="pathway name" value="Nonsense Mediated Decay (NMD) enhanced by the Exon Junction Complex (EJC)"/>
</dbReference>
<dbReference type="BioGRID-ORCS" id="3355144">
    <property type="hits" value="1 hit in 1 CRISPR screen"/>
</dbReference>
<dbReference type="GenomeRNAi" id="3355144"/>
<dbReference type="PRO" id="PR:Q9W5N2"/>
<dbReference type="Proteomes" id="UP000000803">
    <property type="component" value="Chromosome 2R"/>
</dbReference>
<dbReference type="Bgee" id="FBgn0040007">
    <property type="expression patterns" value="Expressed in adult middle midgut class I enteroendocrine cell in adult midgut (Drosophila) and 287 other cell types or tissues"/>
</dbReference>
<dbReference type="ExpressionAtlas" id="Q9W5N2">
    <property type="expression patterns" value="baseline and differential"/>
</dbReference>
<dbReference type="GO" id="GO:0022625">
    <property type="term" value="C:cytosolic large ribosomal subunit"/>
    <property type="evidence" value="ECO:0000318"/>
    <property type="project" value="GO_Central"/>
</dbReference>
<dbReference type="GO" id="GO:0022626">
    <property type="term" value="C:cytosolic ribosome"/>
    <property type="evidence" value="ECO:0000314"/>
    <property type="project" value="FlyBase"/>
</dbReference>
<dbReference type="GO" id="GO:0003735">
    <property type="term" value="F:structural constituent of ribosome"/>
    <property type="evidence" value="ECO:0000314"/>
    <property type="project" value="FlyBase"/>
</dbReference>
<dbReference type="GO" id="GO:0002181">
    <property type="term" value="P:cytoplasmic translation"/>
    <property type="evidence" value="ECO:0000304"/>
    <property type="project" value="FlyBase"/>
</dbReference>
<dbReference type="GO" id="GO:0022618">
    <property type="term" value="P:protein-RNA complex assembly"/>
    <property type="evidence" value="ECO:0000318"/>
    <property type="project" value="GO_Central"/>
</dbReference>
<dbReference type="FunFam" id="3.30.720.90:FF:000001">
    <property type="entry name" value="60S ribosomal protein L38"/>
    <property type="match status" value="1"/>
</dbReference>
<dbReference type="Gene3D" id="3.30.720.90">
    <property type="match status" value="1"/>
</dbReference>
<dbReference type="InterPro" id="IPR002675">
    <property type="entry name" value="Ribosomal_eL38"/>
</dbReference>
<dbReference type="InterPro" id="IPR038464">
    <property type="entry name" value="Ribosomal_eL38_sf"/>
</dbReference>
<dbReference type="PANTHER" id="PTHR10965">
    <property type="entry name" value="60S RIBOSOMAL PROTEIN L38"/>
    <property type="match status" value="1"/>
</dbReference>
<dbReference type="PANTHER" id="PTHR10965:SF0">
    <property type="entry name" value="LARGE RIBOSOMAL SUBUNIT PROTEIN EL38"/>
    <property type="match status" value="1"/>
</dbReference>
<dbReference type="Pfam" id="PF01781">
    <property type="entry name" value="Ribosomal_L38e"/>
    <property type="match status" value="1"/>
</dbReference>
<comment type="similarity">
    <text evidence="1">Belongs to the eukaryotic ribosomal protein eL38 family.</text>
</comment>
<accession>Q9W5N2</accession>
<gene>
    <name type="primary">RpL38</name>
    <name type="ORF">CG18001</name>
</gene>
<reference key="1">
    <citation type="journal article" date="2000" name="Science">
        <title>The genome sequence of Drosophila melanogaster.</title>
        <authorList>
            <person name="Adams M.D."/>
            <person name="Celniker S.E."/>
            <person name="Holt R.A."/>
            <person name="Evans C.A."/>
            <person name="Gocayne J.D."/>
            <person name="Amanatides P.G."/>
            <person name="Scherer S.E."/>
            <person name="Li P.W."/>
            <person name="Hoskins R.A."/>
            <person name="Galle R.F."/>
            <person name="George R.A."/>
            <person name="Lewis S.E."/>
            <person name="Richards S."/>
            <person name="Ashburner M."/>
            <person name="Henderson S.N."/>
            <person name="Sutton G.G."/>
            <person name="Wortman J.R."/>
            <person name="Yandell M.D."/>
            <person name="Zhang Q."/>
            <person name="Chen L.X."/>
            <person name="Brandon R.C."/>
            <person name="Rogers Y.-H.C."/>
            <person name="Blazej R.G."/>
            <person name="Champe M."/>
            <person name="Pfeiffer B.D."/>
            <person name="Wan K.H."/>
            <person name="Doyle C."/>
            <person name="Baxter E.G."/>
            <person name="Helt G."/>
            <person name="Nelson C.R."/>
            <person name="Miklos G.L.G."/>
            <person name="Abril J.F."/>
            <person name="Agbayani A."/>
            <person name="An H.-J."/>
            <person name="Andrews-Pfannkoch C."/>
            <person name="Baldwin D."/>
            <person name="Ballew R.M."/>
            <person name="Basu A."/>
            <person name="Baxendale J."/>
            <person name="Bayraktaroglu L."/>
            <person name="Beasley E.M."/>
            <person name="Beeson K.Y."/>
            <person name="Benos P.V."/>
            <person name="Berman B.P."/>
            <person name="Bhandari D."/>
            <person name="Bolshakov S."/>
            <person name="Borkova D."/>
            <person name="Botchan M.R."/>
            <person name="Bouck J."/>
            <person name="Brokstein P."/>
            <person name="Brottier P."/>
            <person name="Burtis K.C."/>
            <person name="Busam D.A."/>
            <person name="Butler H."/>
            <person name="Cadieu E."/>
            <person name="Center A."/>
            <person name="Chandra I."/>
            <person name="Cherry J.M."/>
            <person name="Cawley S."/>
            <person name="Dahlke C."/>
            <person name="Davenport L.B."/>
            <person name="Davies P."/>
            <person name="de Pablos B."/>
            <person name="Delcher A."/>
            <person name="Deng Z."/>
            <person name="Mays A.D."/>
            <person name="Dew I."/>
            <person name="Dietz S.M."/>
            <person name="Dodson K."/>
            <person name="Doup L.E."/>
            <person name="Downes M."/>
            <person name="Dugan-Rocha S."/>
            <person name="Dunkov B.C."/>
            <person name="Dunn P."/>
            <person name="Durbin K.J."/>
            <person name="Evangelista C.C."/>
            <person name="Ferraz C."/>
            <person name="Ferriera S."/>
            <person name="Fleischmann W."/>
            <person name="Fosler C."/>
            <person name="Gabrielian A.E."/>
            <person name="Garg N.S."/>
            <person name="Gelbart W.M."/>
            <person name="Glasser K."/>
            <person name="Glodek A."/>
            <person name="Gong F."/>
            <person name="Gorrell J.H."/>
            <person name="Gu Z."/>
            <person name="Guan P."/>
            <person name="Harris M."/>
            <person name="Harris N.L."/>
            <person name="Harvey D.A."/>
            <person name="Heiman T.J."/>
            <person name="Hernandez J.R."/>
            <person name="Houck J."/>
            <person name="Hostin D."/>
            <person name="Houston K.A."/>
            <person name="Howland T.J."/>
            <person name="Wei M.-H."/>
            <person name="Ibegwam C."/>
            <person name="Jalali M."/>
            <person name="Kalush F."/>
            <person name="Karpen G.H."/>
            <person name="Ke Z."/>
            <person name="Kennison J.A."/>
            <person name="Ketchum K.A."/>
            <person name="Kimmel B.E."/>
            <person name="Kodira C.D."/>
            <person name="Kraft C.L."/>
            <person name="Kravitz S."/>
            <person name="Kulp D."/>
            <person name="Lai Z."/>
            <person name="Lasko P."/>
            <person name="Lei Y."/>
            <person name="Levitsky A.A."/>
            <person name="Li J.H."/>
            <person name="Li Z."/>
            <person name="Liang Y."/>
            <person name="Lin X."/>
            <person name="Liu X."/>
            <person name="Mattei B."/>
            <person name="McIntosh T.C."/>
            <person name="McLeod M.P."/>
            <person name="McPherson D."/>
            <person name="Merkulov G."/>
            <person name="Milshina N.V."/>
            <person name="Mobarry C."/>
            <person name="Morris J."/>
            <person name="Moshrefi A."/>
            <person name="Mount S.M."/>
            <person name="Moy M."/>
            <person name="Murphy B."/>
            <person name="Murphy L."/>
            <person name="Muzny D.M."/>
            <person name="Nelson D.L."/>
            <person name="Nelson D.R."/>
            <person name="Nelson K.A."/>
            <person name="Nixon K."/>
            <person name="Nusskern D.R."/>
            <person name="Pacleb J.M."/>
            <person name="Palazzolo M."/>
            <person name="Pittman G.S."/>
            <person name="Pan S."/>
            <person name="Pollard J."/>
            <person name="Puri V."/>
            <person name="Reese M.G."/>
            <person name="Reinert K."/>
            <person name="Remington K."/>
            <person name="Saunders R.D.C."/>
            <person name="Scheeler F."/>
            <person name="Shen H."/>
            <person name="Shue B.C."/>
            <person name="Siden-Kiamos I."/>
            <person name="Simpson M."/>
            <person name="Skupski M.P."/>
            <person name="Smith T.J."/>
            <person name="Spier E."/>
            <person name="Spradling A.C."/>
            <person name="Stapleton M."/>
            <person name="Strong R."/>
            <person name="Sun E."/>
            <person name="Svirskas R."/>
            <person name="Tector C."/>
            <person name="Turner R."/>
            <person name="Venter E."/>
            <person name="Wang A.H."/>
            <person name="Wang X."/>
            <person name="Wang Z.-Y."/>
            <person name="Wassarman D.A."/>
            <person name="Weinstock G.M."/>
            <person name="Weissenbach J."/>
            <person name="Williams S.M."/>
            <person name="Woodage T."/>
            <person name="Worley K.C."/>
            <person name="Wu D."/>
            <person name="Yang S."/>
            <person name="Yao Q.A."/>
            <person name="Ye J."/>
            <person name="Yeh R.-F."/>
            <person name="Zaveri J.S."/>
            <person name="Zhan M."/>
            <person name="Zhang G."/>
            <person name="Zhao Q."/>
            <person name="Zheng L."/>
            <person name="Zheng X.H."/>
            <person name="Zhong F.N."/>
            <person name="Zhong W."/>
            <person name="Zhou X."/>
            <person name="Zhu S.C."/>
            <person name="Zhu X."/>
            <person name="Smith H.O."/>
            <person name="Gibbs R.A."/>
            <person name="Myers E.W."/>
            <person name="Rubin G.M."/>
            <person name="Venter J.C."/>
        </authorList>
    </citation>
    <scope>NUCLEOTIDE SEQUENCE [LARGE SCALE GENOMIC DNA]</scope>
    <source>
        <strain>Berkeley</strain>
    </source>
</reference>
<reference key="2">
    <citation type="journal article" date="2002" name="Genome Biol.">
        <title>Annotation of the Drosophila melanogaster euchromatic genome: a systematic review.</title>
        <authorList>
            <person name="Misra S."/>
            <person name="Crosby M.A."/>
            <person name="Mungall C.J."/>
            <person name="Matthews B.B."/>
            <person name="Campbell K.S."/>
            <person name="Hradecky P."/>
            <person name="Huang Y."/>
            <person name="Kaminker J.S."/>
            <person name="Millburn G.H."/>
            <person name="Prochnik S.E."/>
            <person name="Smith C.D."/>
            <person name="Tupy J.L."/>
            <person name="Whitfield E.J."/>
            <person name="Bayraktaroglu L."/>
            <person name="Berman B.P."/>
            <person name="Bettencourt B.R."/>
            <person name="Celniker S.E."/>
            <person name="de Grey A.D.N.J."/>
            <person name="Drysdale R.A."/>
            <person name="Harris N.L."/>
            <person name="Richter J."/>
            <person name="Russo S."/>
            <person name="Schroeder A.J."/>
            <person name="Shu S.Q."/>
            <person name="Stapleton M."/>
            <person name="Yamada C."/>
            <person name="Ashburner M."/>
            <person name="Gelbart W.M."/>
            <person name="Rubin G.M."/>
            <person name="Lewis S.E."/>
        </authorList>
    </citation>
    <scope>GENOME REANNOTATION</scope>
    <scope>ALTERNATIVE SPLICING</scope>
    <source>
        <strain>Berkeley</strain>
    </source>
</reference>
<reference key="3">
    <citation type="journal article" date="2002" name="Genome Biol.">
        <title>A Drosophila full-length cDNA resource.</title>
        <authorList>
            <person name="Stapleton M."/>
            <person name="Carlson J.W."/>
            <person name="Brokstein P."/>
            <person name="Yu C."/>
            <person name="Champe M."/>
            <person name="George R.A."/>
            <person name="Guarin H."/>
            <person name="Kronmiller B."/>
            <person name="Pacleb J.M."/>
            <person name="Park S."/>
            <person name="Wan K.H."/>
            <person name="Rubin G.M."/>
            <person name="Celniker S.E."/>
        </authorList>
    </citation>
    <scope>NUCLEOTIDE SEQUENCE [LARGE SCALE MRNA]</scope>
    <source>
        <strain>Berkeley</strain>
        <tissue>Embryo</tissue>
    </source>
</reference>
<reference key="4">
    <citation type="journal article" date="2013" name="Nature">
        <title>Structures of the human and Drosophila 80S ribosome.</title>
        <authorList>
            <person name="Anger A.M."/>
            <person name="Armache J.P."/>
            <person name="Berninghausen O."/>
            <person name="Habeck M."/>
            <person name="Subklewe M."/>
            <person name="Wilson D.N."/>
            <person name="Beckmann R."/>
        </authorList>
    </citation>
    <scope>STRUCTURE BY ELECTRON MICROSCOPY (6.0 ANGSTROMS) OF THE 80S RIBOSOME</scope>
</reference>
<organism>
    <name type="scientific">Drosophila melanogaster</name>
    <name type="common">Fruit fly</name>
    <dbReference type="NCBI Taxonomy" id="7227"/>
    <lineage>
        <taxon>Eukaryota</taxon>
        <taxon>Metazoa</taxon>
        <taxon>Ecdysozoa</taxon>
        <taxon>Arthropoda</taxon>
        <taxon>Hexapoda</taxon>
        <taxon>Insecta</taxon>
        <taxon>Pterygota</taxon>
        <taxon>Neoptera</taxon>
        <taxon>Endopterygota</taxon>
        <taxon>Diptera</taxon>
        <taxon>Brachycera</taxon>
        <taxon>Muscomorpha</taxon>
        <taxon>Ephydroidea</taxon>
        <taxon>Drosophilidae</taxon>
        <taxon>Drosophila</taxon>
        <taxon>Sophophora</taxon>
    </lineage>
</organism>
<sequence length="70" mass="8200">MPREIKEVKDFLNKARRSDARAVKIKKNPTNTKFKIRCSRFLYTLVVQDKEKADKIKQSLPPGLQVKEVK</sequence>
<proteinExistence type="evidence at protein level"/>
<name>RL38_DROME</name>
<protein>
    <recommendedName>
        <fullName evidence="1">Large ribosomal subunit protein eL38</fullName>
    </recommendedName>
    <alternativeName>
        <fullName>60S ribosomal protein L38</fullName>
    </alternativeName>
</protein>
<keyword id="KW-0002">3D-structure</keyword>
<keyword id="KW-1185">Reference proteome</keyword>
<keyword id="KW-0687">Ribonucleoprotein</keyword>
<keyword id="KW-0689">Ribosomal protein</keyword>
<evidence type="ECO:0000305" key="1"/>